<keyword id="KW-0158">Chromosome</keyword>
<keyword id="KW-0238">DNA-binding</keyword>
<keyword id="KW-0325">Glycoprotein</keyword>
<keyword id="KW-1017">Isopeptide bond</keyword>
<keyword id="KW-0544">Nucleosome core</keyword>
<keyword id="KW-0539">Nucleus</keyword>
<keyword id="KW-0597">Phosphoprotein</keyword>
<keyword id="KW-1185">Reference proteome</keyword>
<keyword id="KW-0832">Ubl conjugation</keyword>
<feature type="initiator methionine" description="Removed" evidence="1">
    <location>
        <position position="1"/>
    </location>
</feature>
<feature type="chain" id="PRO_0000071897" description="Histone H2B.2, sperm">
    <location>
        <begin position="2"/>
        <end position="144"/>
    </location>
</feature>
<feature type="region of interest" description="Disordered" evidence="2">
    <location>
        <begin position="1"/>
        <end position="51"/>
    </location>
</feature>
<feature type="short sequence motif" description="SPKK motif 1">
    <location>
        <begin position="4"/>
        <end position="7"/>
    </location>
</feature>
<feature type="short sequence motif" description="SPKK motif 2">
    <location>
        <begin position="9"/>
        <end position="12"/>
    </location>
</feature>
<feature type="short sequence motif" description="SPKK motif 3">
    <location>
        <begin position="14"/>
        <end position="17"/>
    </location>
</feature>
<feature type="short sequence motif" description="SPKK motif 4">
    <location>
        <begin position="19"/>
        <end position="22"/>
    </location>
</feature>
<feature type="short sequence motif" description="SPKK motif 5">
    <location>
        <begin position="25"/>
        <end position="28"/>
    </location>
</feature>
<feature type="compositionally biased region" description="Basic residues" evidence="2">
    <location>
        <begin position="24"/>
        <end position="51"/>
    </location>
</feature>
<feature type="modified residue" description="Phosphoserine" evidence="1">
    <location>
        <position position="14"/>
    </location>
</feature>
<feature type="modified residue" description="Phosphoserine" evidence="1">
    <location>
        <position position="19"/>
    </location>
</feature>
<feature type="modified residue" description="Phosphoserine" evidence="1">
    <location>
        <position position="25"/>
    </location>
</feature>
<feature type="glycosylation site" description="O-linked (GlcNAc) serine" evidence="1">
    <location>
        <position position="131"/>
    </location>
</feature>
<feature type="cross-link" description="Glycyl lysine isopeptide (Lys-Gly) (interchain with G-Cter in ubiquitin)" evidence="1">
    <location>
        <position position="139"/>
    </location>
</feature>
<dbReference type="EMBL" id="M13634">
    <property type="protein sequence ID" value="AAA30058.1"/>
    <property type="molecule type" value="mRNA"/>
</dbReference>
<dbReference type="PIR" id="A25381">
    <property type="entry name" value="HSURB1"/>
</dbReference>
<dbReference type="RefSeq" id="NP_999721.1">
    <property type="nucleotide sequence ID" value="NM_214556.2"/>
</dbReference>
<dbReference type="SMR" id="P16887"/>
<dbReference type="STRING" id="7668.P16887"/>
<dbReference type="EnsemblMetazoa" id="NM_214556">
    <property type="protein sequence ID" value="NP_999721"/>
    <property type="gene ID" value="LOC373351"/>
</dbReference>
<dbReference type="GeneID" id="373351"/>
<dbReference type="KEGG" id="spu:373351"/>
<dbReference type="eggNOG" id="KOG1744">
    <property type="taxonomic scope" value="Eukaryota"/>
</dbReference>
<dbReference type="HOGENOM" id="CLU_531679_0_0_1"/>
<dbReference type="InParanoid" id="P16887"/>
<dbReference type="OMA" id="YGSYIYR"/>
<dbReference type="OrthoDB" id="1733721at2759"/>
<dbReference type="PhylomeDB" id="P16887"/>
<dbReference type="Proteomes" id="UP000007110">
    <property type="component" value="Unassembled WGS sequence"/>
</dbReference>
<dbReference type="GO" id="GO:0000786">
    <property type="term" value="C:nucleosome"/>
    <property type="evidence" value="ECO:0007669"/>
    <property type="project" value="UniProtKB-KW"/>
</dbReference>
<dbReference type="GO" id="GO:0005634">
    <property type="term" value="C:nucleus"/>
    <property type="evidence" value="ECO:0007669"/>
    <property type="project" value="UniProtKB-SubCell"/>
</dbReference>
<dbReference type="GO" id="GO:0003677">
    <property type="term" value="F:DNA binding"/>
    <property type="evidence" value="ECO:0007669"/>
    <property type="project" value="UniProtKB-KW"/>
</dbReference>
<dbReference type="GO" id="GO:0046982">
    <property type="term" value="F:protein heterodimerization activity"/>
    <property type="evidence" value="ECO:0007669"/>
    <property type="project" value="InterPro"/>
</dbReference>
<dbReference type="GO" id="GO:0030527">
    <property type="term" value="F:structural constituent of chromatin"/>
    <property type="evidence" value="ECO:0007669"/>
    <property type="project" value="InterPro"/>
</dbReference>
<dbReference type="CDD" id="cd22910">
    <property type="entry name" value="HFD_H2B"/>
    <property type="match status" value="1"/>
</dbReference>
<dbReference type="FunFam" id="1.10.20.10:FF:000016">
    <property type="entry name" value="Histone H2B"/>
    <property type="match status" value="1"/>
</dbReference>
<dbReference type="Gene3D" id="1.10.20.10">
    <property type="entry name" value="Histone, subunit A"/>
    <property type="match status" value="1"/>
</dbReference>
<dbReference type="InterPro" id="IPR009072">
    <property type="entry name" value="Histone-fold"/>
</dbReference>
<dbReference type="InterPro" id="IPR007125">
    <property type="entry name" value="Histone_H2A/H2B/H3"/>
</dbReference>
<dbReference type="InterPro" id="IPR000558">
    <property type="entry name" value="Histone_H2B"/>
</dbReference>
<dbReference type="InterPro" id="IPR055333">
    <property type="entry name" value="HISTONE_H2B_site"/>
</dbReference>
<dbReference type="PANTHER" id="PTHR23428">
    <property type="entry name" value="HISTONE H2B"/>
    <property type="match status" value="1"/>
</dbReference>
<dbReference type="Pfam" id="PF00125">
    <property type="entry name" value="Histone"/>
    <property type="match status" value="1"/>
</dbReference>
<dbReference type="PRINTS" id="PR00621">
    <property type="entry name" value="HISTONEH2B"/>
</dbReference>
<dbReference type="SMART" id="SM00427">
    <property type="entry name" value="H2B"/>
    <property type="match status" value="1"/>
</dbReference>
<dbReference type="SUPFAM" id="SSF47113">
    <property type="entry name" value="Histone-fold"/>
    <property type="match status" value="1"/>
</dbReference>
<dbReference type="PROSITE" id="PS00357">
    <property type="entry name" value="HISTONE_H2B"/>
    <property type="match status" value="1"/>
</dbReference>
<protein>
    <recommendedName>
        <fullName>Histone H2B.2, sperm</fullName>
    </recommendedName>
</protein>
<proteinExistence type="evidence at transcript level"/>
<sequence>MPRSPSKTSPRKGSPRRGSPSRKASPKRGGKGAKRAGKGGRRRNVVRRRRRRRESYGIYIYKVLKQVHPDTGISSRGMSVMNSFVNDIFGRIAGEASRLTRANRRSTISSREIQTAVRLLLPGELAKHAVSEGTKAVTKYTTSR</sequence>
<reference key="1">
    <citation type="journal article" date="1986" name="Mol. Cell. Biol.">
        <title>Analysis of histone gene expression in adult tissues of the sea urchins Strongylocentrotus purpuratus and Lytechinus pictus: tissue-specific expression of sperm histone genes.</title>
        <authorList>
            <person name="Lieber T."/>
            <person name="Weisser K."/>
            <person name="Childs G."/>
        </authorList>
    </citation>
    <scope>NUCLEOTIDE SEQUENCE [MRNA]</scope>
    <source>
        <tissue>Testis</tissue>
    </source>
</reference>
<name>H2BS2_STRPU</name>
<organism>
    <name type="scientific">Strongylocentrotus purpuratus</name>
    <name type="common">Purple sea urchin</name>
    <dbReference type="NCBI Taxonomy" id="7668"/>
    <lineage>
        <taxon>Eukaryota</taxon>
        <taxon>Metazoa</taxon>
        <taxon>Echinodermata</taxon>
        <taxon>Eleutherozoa</taxon>
        <taxon>Echinozoa</taxon>
        <taxon>Echinoidea</taxon>
        <taxon>Euechinoidea</taxon>
        <taxon>Echinacea</taxon>
        <taxon>Camarodonta</taxon>
        <taxon>Echinidea</taxon>
        <taxon>Strongylocentrotidae</taxon>
        <taxon>Strongylocentrotus</taxon>
    </lineage>
</organism>
<evidence type="ECO:0000250" key="1"/>
<evidence type="ECO:0000256" key="2">
    <source>
        <dbReference type="SAM" id="MobiDB-lite"/>
    </source>
</evidence>
<evidence type="ECO:0000305" key="3"/>
<accession>P16887</accession>
<comment type="function">
    <text>Core component of nucleosome. Nucleosomes wrap and compact DNA into chromatin, limiting DNA accessibility to the cellular machineries which require DNA as a template. Histones thereby play a central role in transcription regulation, DNA repair, DNA replication and chromosomal stability. DNA accessibility is regulated via a complex set of post-translational modifications of histones, also called histone code, and nucleosome remodeling.</text>
</comment>
<comment type="subunit">
    <text>The nucleosome is a histone octamer containing two molecules each of H2A, H2B, H3 and H4 assembled in one H3-H4 heterotetramer and two H2A-H2B heterodimers. The octamer wraps approximately 147 bp of DNA.</text>
</comment>
<comment type="subcellular location">
    <subcellularLocation>
        <location>Nucleus</location>
    </subcellularLocation>
    <subcellularLocation>
        <location>Chromosome</location>
    </subcellularLocation>
</comment>
<comment type="domain">
    <text>Contains 5 SPKK motifs which may interact with the minor groove of A/T-rich DNA sites. Phosphorylation of this motif may regulate DNA binding. This motif is reiterated in both termini of histone H1 and in the C-terminus of plant H2A, but its presence in the N-terminus seems to be unique to sea urchin histones H2B.</text>
</comment>
<comment type="PTM">
    <text evidence="1">Monoubiquitination of Lys-139 gives a specific tag for epigenetic transcriptional activation and is also prerequisite for histone H3 'Lys-4' and 'Lys-79' methylation.</text>
</comment>
<comment type="PTM">
    <text evidence="1">Phosphorylated on SPKK motifs 3, 4 and 5; which may regulate DNA binding. Dephosphorylated during maturation of spermatids to mature sperm and rephosphorylated at fertilization (By similarity).</text>
</comment>
<comment type="PTM">
    <text evidence="1">GlcNAcylation at Ser-131 promotes monoubiquitination of Lys-139. It fluctuates in response to extracellular glucose, and associates with transcribed genes (By similarity).</text>
</comment>
<comment type="similarity">
    <text evidence="3">Belongs to the histone H2B family.</text>
</comment>